<gene>
    <name evidence="1" type="primary">hrcA</name>
    <name type="ordered locus">Ajs_0905</name>
</gene>
<reference key="1">
    <citation type="submission" date="2006-12" db="EMBL/GenBank/DDBJ databases">
        <title>Complete sequence of chromosome 1 of Acidovorax sp. JS42.</title>
        <authorList>
            <person name="Copeland A."/>
            <person name="Lucas S."/>
            <person name="Lapidus A."/>
            <person name="Barry K."/>
            <person name="Detter J.C."/>
            <person name="Glavina del Rio T."/>
            <person name="Dalin E."/>
            <person name="Tice H."/>
            <person name="Pitluck S."/>
            <person name="Chertkov O."/>
            <person name="Brettin T."/>
            <person name="Bruce D."/>
            <person name="Han C."/>
            <person name="Tapia R."/>
            <person name="Gilna P."/>
            <person name="Schmutz J."/>
            <person name="Larimer F."/>
            <person name="Land M."/>
            <person name="Hauser L."/>
            <person name="Kyrpides N."/>
            <person name="Kim E."/>
            <person name="Stahl D."/>
            <person name="Richardson P."/>
        </authorList>
    </citation>
    <scope>NUCLEOTIDE SEQUENCE [LARGE SCALE GENOMIC DNA]</scope>
    <source>
        <strain>JS42</strain>
    </source>
</reference>
<evidence type="ECO:0000255" key="1">
    <source>
        <dbReference type="HAMAP-Rule" id="MF_00081"/>
    </source>
</evidence>
<accession>A1W4H2</accession>
<keyword id="KW-0678">Repressor</keyword>
<keyword id="KW-0346">Stress response</keyword>
<keyword id="KW-0804">Transcription</keyword>
<keyword id="KW-0805">Transcription regulation</keyword>
<dbReference type="EMBL" id="CP000539">
    <property type="protein sequence ID" value="ABM41147.1"/>
    <property type="molecule type" value="Genomic_DNA"/>
</dbReference>
<dbReference type="SMR" id="A1W4H2"/>
<dbReference type="STRING" id="232721.Ajs_0905"/>
<dbReference type="KEGG" id="ajs:Ajs_0905"/>
<dbReference type="eggNOG" id="COG1420">
    <property type="taxonomic scope" value="Bacteria"/>
</dbReference>
<dbReference type="HOGENOM" id="CLU_050019_0_0_4"/>
<dbReference type="Proteomes" id="UP000000645">
    <property type="component" value="Chromosome"/>
</dbReference>
<dbReference type="GO" id="GO:0003677">
    <property type="term" value="F:DNA binding"/>
    <property type="evidence" value="ECO:0007669"/>
    <property type="project" value="InterPro"/>
</dbReference>
<dbReference type="GO" id="GO:0045892">
    <property type="term" value="P:negative regulation of DNA-templated transcription"/>
    <property type="evidence" value="ECO:0007669"/>
    <property type="project" value="UniProtKB-UniRule"/>
</dbReference>
<dbReference type="Gene3D" id="3.30.450.40">
    <property type="match status" value="1"/>
</dbReference>
<dbReference type="Gene3D" id="3.30.390.60">
    <property type="entry name" value="Heat-inducible transcription repressor hrca homolog, domain 3"/>
    <property type="match status" value="1"/>
</dbReference>
<dbReference type="Gene3D" id="1.10.10.10">
    <property type="entry name" value="Winged helix-like DNA-binding domain superfamily/Winged helix DNA-binding domain"/>
    <property type="match status" value="1"/>
</dbReference>
<dbReference type="HAMAP" id="MF_00081">
    <property type="entry name" value="HrcA"/>
    <property type="match status" value="1"/>
</dbReference>
<dbReference type="InterPro" id="IPR029016">
    <property type="entry name" value="GAF-like_dom_sf"/>
</dbReference>
<dbReference type="InterPro" id="IPR002571">
    <property type="entry name" value="HrcA"/>
</dbReference>
<dbReference type="InterPro" id="IPR021153">
    <property type="entry name" value="HrcA_C"/>
</dbReference>
<dbReference type="InterPro" id="IPR036388">
    <property type="entry name" value="WH-like_DNA-bd_sf"/>
</dbReference>
<dbReference type="InterPro" id="IPR036390">
    <property type="entry name" value="WH_DNA-bd_sf"/>
</dbReference>
<dbReference type="InterPro" id="IPR005104">
    <property type="entry name" value="WHTH_HrcA_DNA-bd"/>
</dbReference>
<dbReference type="InterPro" id="IPR023120">
    <property type="entry name" value="WHTH_transcript_rep_HrcA_IDD"/>
</dbReference>
<dbReference type="NCBIfam" id="TIGR00331">
    <property type="entry name" value="hrcA"/>
    <property type="match status" value="1"/>
</dbReference>
<dbReference type="PANTHER" id="PTHR34824">
    <property type="entry name" value="HEAT-INDUCIBLE TRANSCRIPTION REPRESSOR HRCA"/>
    <property type="match status" value="1"/>
</dbReference>
<dbReference type="PANTHER" id="PTHR34824:SF1">
    <property type="entry name" value="HEAT-INDUCIBLE TRANSCRIPTION REPRESSOR HRCA"/>
    <property type="match status" value="1"/>
</dbReference>
<dbReference type="Pfam" id="PF01628">
    <property type="entry name" value="HrcA"/>
    <property type="match status" value="1"/>
</dbReference>
<dbReference type="Pfam" id="PF03444">
    <property type="entry name" value="HrcA_DNA-bdg"/>
    <property type="match status" value="1"/>
</dbReference>
<dbReference type="PIRSF" id="PIRSF005485">
    <property type="entry name" value="HrcA"/>
    <property type="match status" value="1"/>
</dbReference>
<dbReference type="SUPFAM" id="SSF55781">
    <property type="entry name" value="GAF domain-like"/>
    <property type="match status" value="1"/>
</dbReference>
<dbReference type="SUPFAM" id="SSF46785">
    <property type="entry name" value="Winged helix' DNA-binding domain"/>
    <property type="match status" value="1"/>
</dbReference>
<proteinExistence type="inferred from homology"/>
<comment type="function">
    <text evidence="1">Negative regulator of class I heat shock genes (grpE-dnaK-dnaJ and groELS operons). Prevents heat-shock induction of these operons.</text>
</comment>
<comment type="similarity">
    <text evidence="1">Belongs to the HrcA family.</text>
</comment>
<feature type="chain" id="PRO_1000118282" description="Heat-inducible transcription repressor HrcA">
    <location>
        <begin position="1"/>
        <end position="334"/>
    </location>
</feature>
<organism>
    <name type="scientific">Acidovorax sp. (strain JS42)</name>
    <dbReference type="NCBI Taxonomy" id="232721"/>
    <lineage>
        <taxon>Bacteria</taxon>
        <taxon>Pseudomonadati</taxon>
        <taxon>Pseudomonadota</taxon>
        <taxon>Betaproteobacteria</taxon>
        <taxon>Burkholderiales</taxon>
        <taxon>Comamonadaceae</taxon>
        <taxon>Acidovorax</taxon>
    </lineage>
</organism>
<sequence>MLDDRSKLLLKALVERYIAEGQPVGSRTLSRASGLELSPATIRNVMADLEDLGLIASPHTSAGRVPTAKGYRLFVDTMLTVQQEQLPTVQLMPEQPQKVIANAAHLLSSLSQFVGVVMAPRRASVFRHIEFLRLSEKRFLVIIVSPDGDVQNRVIFTEVDYSQSQLVEAANFLNANYAGLTMEQVRERLKLEVDKLRGEIAALMQAAVSVGSEAMSGSQDEVVFSGERNLLSVSDFSSNMSHLRRAFDLFEQKTQILRLLDISSRAEGVRIFIGGESQVVPFEELSVVSAPYEVDGQVVGTLGVIGPTRMSYDRMIQIVDITSKLVSNALSHRK</sequence>
<name>HRCA_ACISJ</name>
<protein>
    <recommendedName>
        <fullName evidence="1">Heat-inducible transcription repressor HrcA</fullName>
    </recommendedName>
</protein>